<comment type="function">
    <text evidence="1">Essential for the replication of viral ssDNA. The closed circular ssDNA genome is first converted to a superhelical dsDNA. Rep binds a specific region at the genome origin of replication. It introduces an endonucleolytic nick within the conserved sequence 5'-TAATATTAC-3' in the intergenic region of the genome present in all geminiviruses, thereby initiating the rolling circle replication (RCR). Following cleavage, binds covalently to the 5'-phosphate of DNA as a tyrosyl ester. The cleavage gives rise to a free 3'-OH that serves as a primer for the cellular DNA polymerase. The polymerase synthesizes the (+) strand DNA by rolling circle mechanism. After one round of replication, a Rep-catalyzed nucleotidyl transfer reaction releases a circular single-stranded virus genome, thereby terminating the replication. Displays origin-specific DNA cleavage, nucleotidyl transferase, ATPase and helicase activities (By similarity).</text>
</comment>
<comment type="cofactor">
    <cofactor evidence="3">
        <name>Mg(2+)</name>
        <dbReference type="ChEBI" id="CHEBI:18420"/>
    </cofactor>
    <cofactor evidence="3">
        <name>Mn(2+)</name>
        <dbReference type="ChEBI" id="CHEBI:29035"/>
    </cofactor>
    <text evidence="3">Divalent metal cations, possibly Mg(2+) or Mn(2+).</text>
</comment>
<comment type="subunit">
    <text evidence="1">Homooligomer. Interacts with the replication enhancer protein (REn). Interacts with host retinoblastoma-related protein 1 (RBR1), and may thereby induce the transcription of host replicative enzymes even if the cell is not dividing anymore. Interacts with host PCNA. Interacts with host SCE1 protein (By similarity).</text>
</comment>
<comment type="subcellular location">
    <subcellularLocation>
        <location evidence="1">Host nucleus</location>
    </subcellularLocation>
</comment>
<comment type="domain">
    <text evidence="1">There are 3 rolling circle replication (RCR) motifs. RCR-2 is probably involved in metal coordination. RCR-3 is required for phosphodiester bond cleavage for initiation of RCR (By similarity).</text>
</comment>
<comment type="similarity">
    <text evidence="4">Belongs to the geminiviridae Rep protein family.</text>
</comment>
<accession>Q82676</accession>
<keyword id="KW-0067">ATP-binding</keyword>
<keyword id="KW-0190">Covalent protein-DNA linkage</keyword>
<keyword id="KW-0235">DNA replication</keyword>
<keyword id="KW-0238">DNA-binding</keyword>
<keyword id="KW-0255">Endonuclease</keyword>
<keyword id="KW-0347">Helicase</keyword>
<keyword id="KW-1048">Host nucleus</keyword>
<keyword id="KW-0945">Host-virus interaction</keyword>
<keyword id="KW-0378">Hydrolase</keyword>
<keyword id="KW-0479">Metal-binding</keyword>
<keyword id="KW-0511">Multifunctional enzyme</keyword>
<keyword id="KW-0540">Nuclease</keyword>
<keyword id="KW-0547">Nucleotide-binding</keyword>
<keyword id="KW-0548">Nucleotidyltransferase</keyword>
<keyword id="KW-0808">Transferase</keyword>
<sequence length="351" mass="40058">MSPPKRFQINAKNYFLTYPRCSLTKEEALSQIRNFQTPTNPKFIKICRELHENGEPHLHVLIQFEGKYKCQNQRFFDLVSPTRSAHFHPNIQGAKSSSDVKSYIDKDGDTWRWGTFQIDGRSARGGQQSANDAYAAALNSGSKSEALKILRELAPRDYLRDFHHISSNLDRIFTKPPPPYENPFPLSSFDRVPEELDEWFHENVMGRARPLRPKSIVIEGDSRTGKTMWSRALGPHNYLCGHLDLSPKVYNNDAWYNVIDDVDPHYLKHFKRIHGGPEDWQSNTKYGKPVQIKGGIPTIFLCNPGPNSSYKEFLDEEKNSALKAWALKNATFISLEGPLYSGTNQGPTQSC</sequence>
<organismHost>
    <name type="scientific">Manihot esculenta</name>
    <name type="common">Cassava</name>
    <name type="synonym">Jatropha manihot</name>
    <dbReference type="NCBI Taxonomy" id="3983"/>
</organismHost>
<gene>
    <name type="ORF">AC1</name>
    <name type="ORF">AL1</name>
</gene>
<dbReference type="EC" id="2.7.7.-"/>
<dbReference type="EC" id="3.1.21.-"/>
<dbReference type="EMBL" id="Z24758">
    <property type="protein sequence ID" value="CAA80891.1"/>
    <property type="molecule type" value="Genomic_DNA"/>
</dbReference>
<dbReference type="PIR" id="JQ2327">
    <property type="entry name" value="JQ2327"/>
</dbReference>
<dbReference type="RefSeq" id="NP_047233.1">
    <property type="nucleotide sequence ID" value="NC_001932.1"/>
</dbReference>
<dbReference type="SMR" id="Q82676"/>
<dbReference type="KEGG" id="vg:991061"/>
<dbReference type="OrthoDB" id="9195at10239"/>
<dbReference type="Proteomes" id="UP000007210">
    <property type="component" value="Genome"/>
</dbReference>
<dbReference type="GO" id="GO:0042025">
    <property type="term" value="C:host cell nucleus"/>
    <property type="evidence" value="ECO:0007669"/>
    <property type="project" value="UniProtKB-SubCell"/>
</dbReference>
<dbReference type="GO" id="GO:0005524">
    <property type="term" value="F:ATP binding"/>
    <property type="evidence" value="ECO:0007669"/>
    <property type="project" value="UniProtKB-KW"/>
</dbReference>
<dbReference type="GO" id="GO:0003677">
    <property type="term" value="F:DNA binding"/>
    <property type="evidence" value="ECO:0007669"/>
    <property type="project" value="UniProtKB-KW"/>
</dbReference>
<dbReference type="GO" id="GO:0016888">
    <property type="term" value="F:endodeoxyribonuclease activity, producing 5'-phosphomonoesters"/>
    <property type="evidence" value="ECO:0007669"/>
    <property type="project" value="InterPro"/>
</dbReference>
<dbReference type="GO" id="GO:0004386">
    <property type="term" value="F:helicase activity"/>
    <property type="evidence" value="ECO:0007669"/>
    <property type="project" value="UniProtKB-KW"/>
</dbReference>
<dbReference type="GO" id="GO:0046872">
    <property type="term" value="F:metal ion binding"/>
    <property type="evidence" value="ECO:0007669"/>
    <property type="project" value="UniProtKB-KW"/>
</dbReference>
<dbReference type="GO" id="GO:0016779">
    <property type="term" value="F:nucleotidyltransferase activity"/>
    <property type="evidence" value="ECO:0007669"/>
    <property type="project" value="UniProtKB-KW"/>
</dbReference>
<dbReference type="GO" id="GO:0005198">
    <property type="term" value="F:structural molecule activity"/>
    <property type="evidence" value="ECO:0007669"/>
    <property type="project" value="InterPro"/>
</dbReference>
<dbReference type="GO" id="GO:0006260">
    <property type="term" value="P:DNA replication"/>
    <property type="evidence" value="ECO:0007669"/>
    <property type="project" value="UniProtKB-KW"/>
</dbReference>
<dbReference type="FunFam" id="3.40.1310.20:FF:000001">
    <property type="entry name" value="Replication-associated protein"/>
    <property type="match status" value="1"/>
</dbReference>
<dbReference type="Gene3D" id="3.40.1310.20">
    <property type="match status" value="1"/>
</dbReference>
<dbReference type="InterPro" id="IPR049912">
    <property type="entry name" value="CRESS_DNA_REP"/>
</dbReference>
<dbReference type="InterPro" id="IPR001301">
    <property type="entry name" value="Gemini_AL1_CLV"/>
</dbReference>
<dbReference type="InterPro" id="IPR001191">
    <property type="entry name" value="Gemini_AL1_REP"/>
</dbReference>
<dbReference type="InterPro" id="IPR022692">
    <property type="entry name" value="Gemini_AL1_REP_central"/>
</dbReference>
<dbReference type="Pfam" id="PF00799">
    <property type="entry name" value="Gemini_AL1"/>
    <property type="match status" value="1"/>
</dbReference>
<dbReference type="Pfam" id="PF08283">
    <property type="entry name" value="Gemini_AL1_M"/>
    <property type="match status" value="1"/>
</dbReference>
<dbReference type="PRINTS" id="PR00227">
    <property type="entry name" value="GEMCOATAL1"/>
</dbReference>
<dbReference type="PRINTS" id="PR00228">
    <property type="entry name" value="GEMCOATCLVL1"/>
</dbReference>
<dbReference type="SUPFAM" id="SSF55464">
    <property type="entry name" value="Origin of replication-binding domain, RBD-like"/>
    <property type="match status" value="1"/>
</dbReference>
<dbReference type="PROSITE" id="PS52020">
    <property type="entry name" value="CRESS_DNA_REP"/>
    <property type="match status" value="1"/>
</dbReference>
<evidence type="ECO:0000250" key="1"/>
<evidence type="ECO:0000255" key="2"/>
<evidence type="ECO:0000255" key="3">
    <source>
        <dbReference type="PROSITE-ProRule" id="PRU01364"/>
    </source>
</evidence>
<evidence type="ECO:0000305" key="4"/>
<organism>
    <name type="scientific">Indian cassava mosaic virus</name>
    <name type="common">ICMV</name>
    <dbReference type="NCBI Taxonomy" id="31600"/>
    <lineage>
        <taxon>Viruses</taxon>
        <taxon>Monodnaviria</taxon>
        <taxon>Shotokuvirae</taxon>
        <taxon>Cressdnaviricota</taxon>
        <taxon>Repensiviricetes</taxon>
        <taxon>Geplafuvirales</taxon>
        <taxon>Geminiviridae</taxon>
        <taxon>Begomovirus</taxon>
    </lineage>
</organism>
<name>REP_ICMV</name>
<protein>
    <recommendedName>
        <fullName>Replication-associated protein</fullName>
        <shortName>Rep</shortName>
        <ecNumber>2.7.7.-</ecNumber>
        <ecNumber>3.1.21.-</ecNumber>
    </recommendedName>
    <alternativeName>
        <fullName>Protein AC1</fullName>
    </alternativeName>
    <alternativeName>
        <fullName>Protein AL1</fullName>
    </alternativeName>
</protein>
<reference key="1">
    <citation type="journal article" date="1993" name="J. Gen. Virol.">
        <title>Nucleotide sequence evidence for the occurrence of three distinct whitefly-transmitted geminiviruses in cassava.</title>
        <authorList>
            <person name="Hong Y.G."/>
            <person name="Robinson D.J."/>
            <person name="Harrison B.D."/>
        </authorList>
    </citation>
    <scope>NUCLEOTIDE SEQUENCE [GENOMIC DNA]</scope>
</reference>
<reference key="2">
    <citation type="journal article" date="2006" name="Nucleic Acids Res.">
        <title>The oligomeric Rep protein of Mungbean yellow mosaic India virus (MYMIV) is a likely replicative helicase.</title>
        <authorList>
            <person name="Choudhury N.R."/>
            <person name="Malik P.S."/>
            <person name="Singh D.K."/>
            <person name="Islam M.N."/>
            <person name="Kaliappan K."/>
            <person name="Mukherjee S.K."/>
        </authorList>
    </citation>
    <scope>CHARACTERIZATION OF THE HELICASE ACTIVITY</scope>
</reference>
<proteinExistence type="evidence at protein level"/>
<feature type="chain" id="PRO_0000320111" description="Replication-associated protein">
    <location>
        <begin position="1"/>
        <end position="351"/>
    </location>
</feature>
<feature type="domain" description="CRESS-DNA virus Rep endonuclease" evidence="3">
    <location>
        <begin position="8"/>
        <end position="116"/>
    </location>
</feature>
<feature type="region of interest" description="Binding to RBR1" evidence="1">
    <location>
        <begin position="143"/>
        <end position="153"/>
    </location>
</feature>
<feature type="region of interest" description="Oligomerization" evidence="1">
    <location>
        <begin position="156"/>
        <end position="176"/>
    </location>
</feature>
<feature type="short sequence motif" description="RCR-1" evidence="3">
    <location>
        <begin position="15"/>
        <end position="18"/>
    </location>
</feature>
<feature type="short sequence motif" description="RCR-2" evidence="3">
    <location>
        <begin position="57"/>
        <end position="59"/>
    </location>
</feature>
<feature type="short sequence motif" description="RCR-3" evidence="3">
    <location>
        <begin position="103"/>
        <end position="106"/>
    </location>
</feature>
<feature type="active site" description="For DNA cleavage activity" evidence="3">
    <location>
        <position position="103"/>
    </location>
</feature>
<feature type="binding site" evidence="3">
    <location>
        <position position="49"/>
    </location>
    <ligand>
        <name>a divalent metal cation</name>
        <dbReference type="ChEBI" id="CHEBI:60240"/>
    </ligand>
</feature>
<feature type="binding site" evidence="3">
    <location>
        <position position="57"/>
    </location>
    <ligand>
        <name>a divalent metal cation</name>
        <dbReference type="ChEBI" id="CHEBI:60240"/>
    </ligand>
</feature>
<feature type="binding site" evidence="3">
    <location>
        <position position="59"/>
    </location>
    <ligand>
        <name>a divalent metal cation</name>
        <dbReference type="ChEBI" id="CHEBI:60240"/>
    </ligand>
</feature>
<feature type="binding site" evidence="3">
    <location>
        <position position="107"/>
    </location>
    <ligand>
        <name>a divalent metal cation</name>
        <dbReference type="ChEBI" id="CHEBI:60240"/>
    </ligand>
</feature>
<feature type="binding site" evidence="2">
    <location>
        <begin position="220"/>
        <end position="227"/>
    </location>
    <ligand>
        <name>ATP</name>
        <dbReference type="ChEBI" id="CHEBI:30616"/>
    </ligand>
</feature>